<protein>
    <recommendedName>
        <fullName evidence="2">Large ribosomal subunit protein uL5c</fullName>
    </recommendedName>
    <alternativeName>
        <fullName>50S ribosomal protein L5, chloroplastic</fullName>
    </alternativeName>
</protein>
<dbReference type="EMBL" id="AF041468">
    <property type="protein sequence ID" value="AAC35715.1"/>
    <property type="molecule type" value="Genomic_DNA"/>
</dbReference>
<dbReference type="RefSeq" id="NP_050781.1">
    <property type="nucleotide sequence ID" value="NC_000926.1"/>
</dbReference>
<dbReference type="SMR" id="O46906"/>
<dbReference type="GeneID" id="857089"/>
<dbReference type="HOGENOM" id="CLU_061015_2_1_1"/>
<dbReference type="OMA" id="KLKAHHF"/>
<dbReference type="GO" id="GO:0009507">
    <property type="term" value="C:chloroplast"/>
    <property type="evidence" value="ECO:0007669"/>
    <property type="project" value="UniProtKB-SubCell"/>
</dbReference>
<dbReference type="GO" id="GO:1990904">
    <property type="term" value="C:ribonucleoprotein complex"/>
    <property type="evidence" value="ECO:0007669"/>
    <property type="project" value="UniProtKB-KW"/>
</dbReference>
<dbReference type="GO" id="GO:0005840">
    <property type="term" value="C:ribosome"/>
    <property type="evidence" value="ECO:0007669"/>
    <property type="project" value="UniProtKB-KW"/>
</dbReference>
<dbReference type="GO" id="GO:0019843">
    <property type="term" value="F:rRNA binding"/>
    <property type="evidence" value="ECO:0007669"/>
    <property type="project" value="UniProtKB-UniRule"/>
</dbReference>
<dbReference type="GO" id="GO:0003735">
    <property type="term" value="F:structural constituent of ribosome"/>
    <property type="evidence" value="ECO:0007669"/>
    <property type="project" value="InterPro"/>
</dbReference>
<dbReference type="GO" id="GO:0006412">
    <property type="term" value="P:translation"/>
    <property type="evidence" value="ECO:0007669"/>
    <property type="project" value="UniProtKB-UniRule"/>
</dbReference>
<dbReference type="FunFam" id="3.30.1440.10:FF:000001">
    <property type="entry name" value="50S ribosomal protein L5"/>
    <property type="match status" value="1"/>
</dbReference>
<dbReference type="Gene3D" id="3.30.1440.10">
    <property type="match status" value="1"/>
</dbReference>
<dbReference type="HAMAP" id="MF_01333_B">
    <property type="entry name" value="Ribosomal_uL5_B"/>
    <property type="match status" value="1"/>
</dbReference>
<dbReference type="InterPro" id="IPR002132">
    <property type="entry name" value="Ribosomal_uL5"/>
</dbReference>
<dbReference type="InterPro" id="IPR020930">
    <property type="entry name" value="Ribosomal_uL5_bac-type"/>
</dbReference>
<dbReference type="InterPro" id="IPR031309">
    <property type="entry name" value="Ribosomal_uL5_C"/>
</dbReference>
<dbReference type="InterPro" id="IPR022803">
    <property type="entry name" value="Ribosomal_uL5_dom_sf"/>
</dbReference>
<dbReference type="InterPro" id="IPR031310">
    <property type="entry name" value="Ribosomal_uL5_N"/>
</dbReference>
<dbReference type="NCBIfam" id="NF000585">
    <property type="entry name" value="PRK00010.1"/>
    <property type="match status" value="1"/>
</dbReference>
<dbReference type="PANTHER" id="PTHR11994">
    <property type="entry name" value="60S RIBOSOMAL PROTEIN L11-RELATED"/>
    <property type="match status" value="1"/>
</dbReference>
<dbReference type="Pfam" id="PF00281">
    <property type="entry name" value="Ribosomal_L5"/>
    <property type="match status" value="1"/>
</dbReference>
<dbReference type="Pfam" id="PF00673">
    <property type="entry name" value="Ribosomal_L5_C"/>
    <property type="match status" value="1"/>
</dbReference>
<dbReference type="PIRSF" id="PIRSF002161">
    <property type="entry name" value="Ribosomal_L5"/>
    <property type="match status" value="1"/>
</dbReference>
<dbReference type="SUPFAM" id="SSF55282">
    <property type="entry name" value="RL5-like"/>
    <property type="match status" value="1"/>
</dbReference>
<gene>
    <name type="primary">rpl5</name>
</gene>
<geneLocation type="chloroplast"/>
<reference key="1">
    <citation type="journal article" date="1997" name="Biochem. Mol. Biol. Int.">
        <title>The large ribosomal protein gene cluster of a cryptomonad plastid: gene organization, sequence and evolutionary implications.</title>
        <authorList>
            <person name="Wang S.L."/>
            <person name="Liu X.-Q."/>
            <person name="Douglas S.E."/>
        </authorList>
    </citation>
    <scope>NUCLEOTIDE SEQUENCE [GENOMIC DNA]</scope>
</reference>
<reference key="2">
    <citation type="journal article" date="1999" name="J. Mol. Evol.">
        <title>The plastid genome of the cryptophyte alga, Guillardia theta: complete sequence and conserved synteny groups confirm its common ancestry with red algae.</title>
        <authorList>
            <person name="Douglas S.E."/>
            <person name="Penny S.L."/>
        </authorList>
    </citation>
    <scope>NUCLEOTIDE SEQUENCE [LARGE SCALE GENOMIC DNA]</scope>
</reference>
<sequence>MNKSLKEIYYQDVIPGLIEQFNYTNIHQVLKITKITLNRGLGEASKNNKILEASIKEFELISGQHPLINKARKSVAGFKIREGMPVGISVTLRKKLMYTFLEKLIHLSLPRIRDFRGVSVKSFDGRGNYNLGIKEQLIFPEIEYDQVDQVRGLDISITTTAKTQQEGIALLRALGMPFNDN</sequence>
<feature type="chain" id="PRO_0000125043" description="Large ribosomal subunit protein uL5c">
    <location>
        <begin position="1"/>
        <end position="181"/>
    </location>
</feature>
<comment type="function">
    <text evidence="1">Binds 5S rRNA, forms part of the central protuberance of the 50S subunit.</text>
</comment>
<comment type="subunit">
    <text evidence="1">Part of the 50S ribosomal subunit; contacts the 5S rRNA.</text>
</comment>
<comment type="subcellular location">
    <subcellularLocation>
        <location>Plastid</location>
        <location>Chloroplast</location>
    </subcellularLocation>
</comment>
<comment type="similarity">
    <text evidence="2">Belongs to the universal ribosomal protein uL5 family.</text>
</comment>
<accession>O46906</accession>
<proteinExistence type="inferred from homology"/>
<keyword id="KW-0150">Chloroplast</keyword>
<keyword id="KW-0934">Plastid</keyword>
<keyword id="KW-0687">Ribonucleoprotein</keyword>
<keyword id="KW-0689">Ribosomal protein</keyword>
<keyword id="KW-0694">RNA-binding</keyword>
<keyword id="KW-0699">rRNA-binding</keyword>
<organism>
    <name type="scientific">Guillardia theta</name>
    <name type="common">Cryptophyte</name>
    <name type="synonym">Cryptomonas phi</name>
    <dbReference type="NCBI Taxonomy" id="55529"/>
    <lineage>
        <taxon>Eukaryota</taxon>
        <taxon>Cryptophyceae</taxon>
        <taxon>Pyrenomonadales</taxon>
        <taxon>Geminigeraceae</taxon>
        <taxon>Guillardia</taxon>
    </lineage>
</organism>
<name>RK5_GUITH</name>
<evidence type="ECO:0000250" key="1"/>
<evidence type="ECO:0000305" key="2"/>